<organism>
    <name type="scientific">Escherichia coli (strain K12)</name>
    <dbReference type="NCBI Taxonomy" id="83333"/>
    <lineage>
        <taxon>Bacteria</taxon>
        <taxon>Pseudomonadati</taxon>
        <taxon>Pseudomonadota</taxon>
        <taxon>Gammaproteobacteria</taxon>
        <taxon>Enterobacterales</taxon>
        <taxon>Enterobacteriaceae</taxon>
        <taxon>Escherichia</taxon>
    </lineage>
</organism>
<proteinExistence type="predicted"/>
<sequence>MKQPGEELQETLTELDDRAVVDYLIKNPEFFIRNARAVEAIRVPHPVRGTVSLVEWHMARARNHIHVLEENMALLMEQAIANEGLFYRLLYLQRSLTAASSLDDMLMRFHRWARDLGLAGASLRLFPDRWRLGAPSNHTHLALSRQSFEPLRIQRLGQEQHYLGPLNGPELLVVLPEAKAVGSVAMSMLGSDADLGVVLFTSRDASHYQQGQGTQLLHEIALMLPELLERWIERV</sequence>
<keyword id="KW-1185">Reference proteome</keyword>
<accession>P23305</accession>
<accession>Q2M8B6</accession>
<name>YIGA_ECOLI</name>
<gene>
    <name type="primary">yigA</name>
    <name type="ordered locus">b3810</name>
    <name type="ordered locus">JW3783</name>
</gene>
<dbReference type="EMBL" id="M38257">
    <property type="protein sequence ID" value="AAA24762.1"/>
    <property type="molecule type" value="Genomic_DNA"/>
</dbReference>
<dbReference type="EMBL" id="M87049">
    <property type="protein sequence ID" value="AAA67606.1"/>
    <property type="molecule type" value="Genomic_DNA"/>
</dbReference>
<dbReference type="EMBL" id="U00096">
    <property type="protein sequence ID" value="AAC76813.1"/>
    <property type="molecule type" value="Genomic_DNA"/>
</dbReference>
<dbReference type="EMBL" id="AP009048">
    <property type="protein sequence ID" value="BAE77490.1"/>
    <property type="molecule type" value="Genomic_DNA"/>
</dbReference>
<dbReference type="PIR" id="B37841">
    <property type="entry name" value="B37841"/>
</dbReference>
<dbReference type="RefSeq" id="NP_418255.1">
    <property type="nucleotide sequence ID" value="NC_000913.3"/>
</dbReference>
<dbReference type="RefSeq" id="WP_000812796.1">
    <property type="nucleotide sequence ID" value="NZ_SSZK01000025.1"/>
</dbReference>
<dbReference type="SMR" id="P23305"/>
<dbReference type="BioGRID" id="4262613">
    <property type="interactions" value="27"/>
</dbReference>
<dbReference type="BioGRID" id="852656">
    <property type="interactions" value="1"/>
</dbReference>
<dbReference type="DIP" id="DIP-12478N"/>
<dbReference type="FunCoup" id="P23305">
    <property type="interactions" value="42"/>
</dbReference>
<dbReference type="IntAct" id="P23305">
    <property type="interactions" value="4"/>
</dbReference>
<dbReference type="STRING" id="511145.b3810"/>
<dbReference type="jPOST" id="P23305"/>
<dbReference type="PaxDb" id="511145-b3810"/>
<dbReference type="EnsemblBacteria" id="AAC76813">
    <property type="protein sequence ID" value="AAC76813"/>
    <property type="gene ID" value="b3810"/>
</dbReference>
<dbReference type="GeneID" id="948359"/>
<dbReference type="KEGG" id="ecj:JW3783"/>
<dbReference type="KEGG" id="eco:b3810"/>
<dbReference type="PATRIC" id="fig|511145.12.peg.3926"/>
<dbReference type="EchoBASE" id="EB1186"/>
<dbReference type="eggNOG" id="COG3159">
    <property type="taxonomic scope" value="Bacteria"/>
</dbReference>
<dbReference type="HOGENOM" id="CLU_073320_0_0_6"/>
<dbReference type="InParanoid" id="P23305"/>
<dbReference type="OMA" id="PVGRWVS"/>
<dbReference type="PhylomeDB" id="P23305"/>
<dbReference type="BioCyc" id="EcoCyc:EG11201-MONOMER"/>
<dbReference type="PRO" id="PR:P23305"/>
<dbReference type="Proteomes" id="UP000000625">
    <property type="component" value="Chromosome"/>
</dbReference>
<dbReference type="Gene3D" id="3.30.450.40">
    <property type="match status" value="1"/>
</dbReference>
<dbReference type="InterPro" id="IPR007435">
    <property type="entry name" value="DUF484"/>
</dbReference>
<dbReference type="InterPro" id="IPR029016">
    <property type="entry name" value="GAF-like_dom_sf"/>
</dbReference>
<dbReference type="NCBIfam" id="NF008203">
    <property type="entry name" value="PRK10963.1"/>
    <property type="match status" value="1"/>
</dbReference>
<dbReference type="PANTHER" id="PTHR38765">
    <property type="entry name" value="DUF484 DOMAIN-CONTAINING PROTEIN"/>
    <property type="match status" value="1"/>
</dbReference>
<dbReference type="PANTHER" id="PTHR38765:SF1">
    <property type="entry name" value="DUF484 DOMAIN-CONTAINING PROTEIN"/>
    <property type="match status" value="1"/>
</dbReference>
<dbReference type="Pfam" id="PF04340">
    <property type="entry name" value="DUF484"/>
    <property type="match status" value="1"/>
</dbReference>
<reference key="1">
    <citation type="journal article" date="1990" name="J. Bacteriol.">
        <title>Recombination at ColE1 cer requires the Escherichia coli xerC gene product, a member of the lambda integrase family of site-specific recombinases.</title>
        <authorList>
            <person name="Colloms S.D."/>
            <person name="Sykora P."/>
            <person name="Szatmari G."/>
            <person name="Sherratt D.J."/>
        </authorList>
    </citation>
    <scope>NUCLEOTIDE SEQUENCE [GENOMIC DNA]</scope>
    <source>
        <strain>K12</strain>
    </source>
</reference>
<reference key="2">
    <citation type="journal article" date="1992" name="Science">
        <title>Analysis of the Escherichia coli genome: DNA sequence of the region from 84.5 to 86.5 minutes.</title>
        <authorList>
            <person name="Daniels D.L."/>
            <person name="Plunkett G. III"/>
            <person name="Burland V.D."/>
            <person name="Blattner F.R."/>
        </authorList>
    </citation>
    <scope>NUCLEOTIDE SEQUENCE [LARGE SCALE GENOMIC DNA]</scope>
    <source>
        <strain>K12 / MG1655 / ATCC 47076</strain>
    </source>
</reference>
<reference key="3">
    <citation type="journal article" date="1997" name="Science">
        <title>The complete genome sequence of Escherichia coli K-12.</title>
        <authorList>
            <person name="Blattner F.R."/>
            <person name="Plunkett G. III"/>
            <person name="Bloch C.A."/>
            <person name="Perna N.T."/>
            <person name="Burland V."/>
            <person name="Riley M."/>
            <person name="Collado-Vides J."/>
            <person name="Glasner J.D."/>
            <person name="Rode C.K."/>
            <person name="Mayhew G.F."/>
            <person name="Gregor J."/>
            <person name="Davis N.W."/>
            <person name="Kirkpatrick H.A."/>
            <person name="Goeden M.A."/>
            <person name="Rose D.J."/>
            <person name="Mau B."/>
            <person name="Shao Y."/>
        </authorList>
    </citation>
    <scope>NUCLEOTIDE SEQUENCE [LARGE SCALE GENOMIC DNA]</scope>
    <source>
        <strain>K12 / MG1655 / ATCC 47076</strain>
    </source>
</reference>
<reference key="4">
    <citation type="journal article" date="2006" name="Mol. Syst. Biol.">
        <title>Highly accurate genome sequences of Escherichia coli K-12 strains MG1655 and W3110.</title>
        <authorList>
            <person name="Hayashi K."/>
            <person name="Morooka N."/>
            <person name="Yamamoto Y."/>
            <person name="Fujita K."/>
            <person name="Isono K."/>
            <person name="Choi S."/>
            <person name="Ohtsubo E."/>
            <person name="Baba T."/>
            <person name="Wanner B.L."/>
            <person name="Mori H."/>
            <person name="Horiuchi T."/>
        </authorList>
    </citation>
    <scope>NUCLEOTIDE SEQUENCE [LARGE SCALE GENOMIC DNA]</scope>
    <source>
        <strain>K12 / W3110 / ATCC 27325 / DSM 5911</strain>
    </source>
</reference>
<protein>
    <recommendedName>
        <fullName>Uncharacterized protein YigA</fullName>
    </recommendedName>
</protein>
<feature type="chain" id="PRO_0000169648" description="Uncharacterized protein YigA">
    <location>
        <begin position="1"/>
        <end position="235"/>
    </location>
</feature>